<proteinExistence type="evidence at protein level"/>
<feature type="transit peptide" description="Chloroplast" evidence="1">
    <location>
        <begin position="1"/>
        <end position="51"/>
    </location>
</feature>
<feature type="chain" id="PRO_0000397040" description="Transcription factor GTE3, chloroplastic">
    <location>
        <begin position="52"/>
        <end position="461"/>
    </location>
</feature>
<feature type="domain" description="Bromo" evidence="2">
    <location>
        <begin position="114"/>
        <end position="220"/>
    </location>
</feature>
<feature type="domain" description="NET" evidence="3">
    <location>
        <begin position="298"/>
        <end position="379"/>
    </location>
</feature>
<feature type="region of interest" description="Disordered" evidence="4">
    <location>
        <begin position="1"/>
        <end position="41"/>
    </location>
</feature>
<feature type="region of interest" description="Disordered" evidence="4">
    <location>
        <begin position="376"/>
        <end position="461"/>
    </location>
</feature>
<feature type="compositionally biased region" description="Gly residues" evidence="4">
    <location>
        <begin position="1"/>
        <end position="11"/>
    </location>
</feature>
<feature type="compositionally biased region" description="Basic and acidic residues" evidence="4">
    <location>
        <begin position="376"/>
        <end position="392"/>
    </location>
</feature>
<feature type="compositionally biased region" description="Polar residues" evidence="4">
    <location>
        <begin position="393"/>
        <end position="412"/>
    </location>
</feature>
<feature type="compositionally biased region" description="Low complexity" evidence="4">
    <location>
        <begin position="429"/>
        <end position="451"/>
    </location>
</feature>
<feature type="compositionally biased region" description="Basic and acidic residues" evidence="4">
    <location>
        <begin position="452"/>
        <end position="461"/>
    </location>
</feature>
<feature type="sequence conflict" description="In Ref. 4; BAE99992." evidence="6" ref="4">
    <original>G</original>
    <variation>E</variation>
    <location>
        <position position="164"/>
    </location>
</feature>
<dbReference type="EMBL" id="AC008017">
    <property type="protein sequence ID" value="AAD55662.1"/>
    <property type="molecule type" value="Genomic_DNA"/>
</dbReference>
<dbReference type="EMBL" id="AC010556">
    <property type="protein sequence ID" value="AAG52122.1"/>
    <property type="molecule type" value="Genomic_DNA"/>
</dbReference>
<dbReference type="EMBL" id="CP002684">
    <property type="protein sequence ID" value="AEE35419.1"/>
    <property type="molecule type" value="Genomic_DNA"/>
</dbReference>
<dbReference type="EMBL" id="BT020256">
    <property type="protein sequence ID" value="AAV84477.1"/>
    <property type="molecule type" value="mRNA"/>
</dbReference>
<dbReference type="EMBL" id="AK228031">
    <property type="protein sequence ID" value="BAE99992.1"/>
    <property type="molecule type" value="mRNA"/>
</dbReference>
<dbReference type="PIR" id="D96757">
    <property type="entry name" value="D96757"/>
</dbReference>
<dbReference type="RefSeq" id="NP_177458.1">
    <property type="nucleotide sequence ID" value="NM_105973.4"/>
</dbReference>
<dbReference type="SMR" id="Q9S7T1"/>
<dbReference type="BioGRID" id="28865">
    <property type="interactions" value="2"/>
</dbReference>
<dbReference type="FunCoup" id="Q9S7T1">
    <property type="interactions" value="2285"/>
</dbReference>
<dbReference type="STRING" id="3702.Q9S7T1"/>
<dbReference type="GlyGen" id="Q9S7T1">
    <property type="glycosylation" value="1 site"/>
</dbReference>
<dbReference type="iPTMnet" id="Q9S7T1"/>
<dbReference type="PaxDb" id="3702-AT1G73150.1"/>
<dbReference type="ProteomicsDB" id="230168"/>
<dbReference type="EnsemblPlants" id="AT1G73150.1">
    <property type="protein sequence ID" value="AT1G73150.1"/>
    <property type="gene ID" value="AT1G73150"/>
</dbReference>
<dbReference type="GeneID" id="843646"/>
<dbReference type="Gramene" id="AT1G73150.1">
    <property type="protein sequence ID" value="AT1G73150.1"/>
    <property type="gene ID" value="AT1G73150"/>
</dbReference>
<dbReference type="KEGG" id="ath:AT1G73150"/>
<dbReference type="Araport" id="AT1G73150"/>
<dbReference type="TAIR" id="AT1G73150">
    <property type="gene designation" value="GTE3"/>
</dbReference>
<dbReference type="eggNOG" id="KOG1474">
    <property type="taxonomic scope" value="Eukaryota"/>
</dbReference>
<dbReference type="HOGENOM" id="CLU_009580_1_0_1"/>
<dbReference type="InParanoid" id="Q9S7T1"/>
<dbReference type="OMA" id="HYVEPLP"/>
<dbReference type="OrthoDB" id="21449at2759"/>
<dbReference type="PhylomeDB" id="Q9S7T1"/>
<dbReference type="PRO" id="PR:Q9S7T1"/>
<dbReference type="Proteomes" id="UP000006548">
    <property type="component" value="Chromosome 1"/>
</dbReference>
<dbReference type="ExpressionAtlas" id="Q9S7T1">
    <property type="expression patterns" value="baseline and differential"/>
</dbReference>
<dbReference type="GO" id="GO:0009507">
    <property type="term" value="C:chloroplast"/>
    <property type="evidence" value="ECO:0007669"/>
    <property type="project" value="UniProtKB-SubCell"/>
</dbReference>
<dbReference type="GO" id="GO:0042393">
    <property type="term" value="F:histone binding"/>
    <property type="evidence" value="ECO:0000314"/>
    <property type="project" value="TAIR"/>
</dbReference>
<dbReference type="GO" id="GO:0006325">
    <property type="term" value="P:chromatin organization"/>
    <property type="evidence" value="ECO:0007669"/>
    <property type="project" value="UniProtKB-KW"/>
</dbReference>
<dbReference type="CDD" id="cd05506">
    <property type="entry name" value="Bromo_plant1"/>
    <property type="match status" value="1"/>
</dbReference>
<dbReference type="Gene3D" id="1.20.1270.220">
    <property type="match status" value="1"/>
</dbReference>
<dbReference type="Gene3D" id="1.20.920.10">
    <property type="entry name" value="Bromodomain-like"/>
    <property type="match status" value="1"/>
</dbReference>
<dbReference type="InterPro" id="IPR001487">
    <property type="entry name" value="Bromodomain"/>
</dbReference>
<dbReference type="InterPro" id="IPR036427">
    <property type="entry name" value="Bromodomain-like_sf"/>
</dbReference>
<dbReference type="InterPro" id="IPR037377">
    <property type="entry name" value="GTE_bromo"/>
</dbReference>
<dbReference type="InterPro" id="IPR027353">
    <property type="entry name" value="NET_dom"/>
</dbReference>
<dbReference type="InterPro" id="IPR038336">
    <property type="entry name" value="NET_sf"/>
</dbReference>
<dbReference type="PANTHER" id="PTHR45926">
    <property type="entry name" value="OSJNBA0053K19.4 PROTEIN"/>
    <property type="match status" value="1"/>
</dbReference>
<dbReference type="Pfam" id="PF17035">
    <property type="entry name" value="BET"/>
    <property type="match status" value="1"/>
</dbReference>
<dbReference type="Pfam" id="PF00439">
    <property type="entry name" value="Bromodomain"/>
    <property type="match status" value="1"/>
</dbReference>
<dbReference type="PRINTS" id="PR00503">
    <property type="entry name" value="BROMODOMAIN"/>
</dbReference>
<dbReference type="SMART" id="SM00297">
    <property type="entry name" value="BROMO"/>
    <property type="match status" value="1"/>
</dbReference>
<dbReference type="SUPFAM" id="SSF47370">
    <property type="entry name" value="Bromodomain"/>
    <property type="match status" value="1"/>
</dbReference>
<dbReference type="PROSITE" id="PS50014">
    <property type="entry name" value="BROMODOMAIN_2"/>
    <property type="match status" value="1"/>
</dbReference>
<dbReference type="PROSITE" id="PS51525">
    <property type="entry name" value="NET"/>
    <property type="match status" value="1"/>
</dbReference>
<evidence type="ECO:0000255" key="1"/>
<evidence type="ECO:0000255" key="2">
    <source>
        <dbReference type="PROSITE-ProRule" id="PRU00035"/>
    </source>
</evidence>
<evidence type="ECO:0000255" key="3">
    <source>
        <dbReference type="PROSITE-ProRule" id="PRU00857"/>
    </source>
</evidence>
<evidence type="ECO:0000256" key="4">
    <source>
        <dbReference type="SAM" id="MobiDB-lite"/>
    </source>
</evidence>
<evidence type="ECO:0000269" key="5">
    <source>
    </source>
</evidence>
<evidence type="ECO:0000305" key="6"/>
<name>GTE3_ARATH</name>
<gene>
    <name type="primary">GTE3</name>
    <name type="ordered locus">At1g73150</name>
    <name type="ORF">F3N23.35</name>
    <name type="ORF">T18K17.19</name>
</gene>
<protein>
    <recommendedName>
        <fullName>Transcription factor GTE3, chloroplastic</fullName>
    </recommendedName>
    <alternativeName>
        <fullName>Bromodomain-containing protein GTE3</fullName>
    </alternativeName>
    <alternativeName>
        <fullName>Protein GLOBAL TRANSCRIPTION FACTOR GROUP E3</fullName>
    </alternativeName>
</protein>
<keyword id="KW-0103">Bromodomain</keyword>
<keyword id="KW-0150">Chloroplast</keyword>
<keyword id="KW-0156">Chromatin regulator</keyword>
<keyword id="KW-0934">Plastid</keyword>
<keyword id="KW-1185">Reference proteome</keyword>
<keyword id="KW-0804">Transcription</keyword>
<keyword id="KW-0805">Transcription regulation</keyword>
<keyword id="KW-0809">Transit peptide</keyword>
<keyword id="KW-0832">Ubl conjugation</keyword>
<sequence length="461" mass="50812">MASGPIAGGGVSKTKHKWSDSGNKSQKRSKPTVANSNSLGLEDNHQMMKISLSSISKLEVRNLKRKLQAELEEVRSLIKRLEPQGNNFAPVPNKKLKTANGGKKGGVHGAAADKGTVQILKSCNNLLTKLMKHKSGWIFNTPVDVVTLGLHDYHNIIKEPMDLGTVKTRLSKSLYKSPLEFAEDVRLTFNNAMLYNPVGHDVYHMAEILLNLFEEKWVPLETQYELLIRKQQPVRDIDFHAPVSTNTHNVEALPLPAPTPSLSPPPPPKVVENRTLERAESMTNPVKPAVLPVVPEKLVEEASANRDLTFDEKRQLSEDLQDLPYDKLEAVVQIIKKRTPELSQQDDEIELDIDSLDLETLWELFRFVTEYKESLSKKKEEQGLDSERDAESFHNSVHESNTLVTGLESSKVTELGHVASTVRQEVNVGGSSSSNSSSSGSGSGSSGSDSDSSGHESDTGN</sequence>
<organism>
    <name type="scientific">Arabidopsis thaliana</name>
    <name type="common">Mouse-ear cress</name>
    <dbReference type="NCBI Taxonomy" id="3702"/>
    <lineage>
        <taxon>Eukaryota</taxon>
        <taxon>Viridiplantae</taxon>
        <taxon>Streptophyta</taxon>
        <taxon>Embryophyta</taxon>
        <taxon>Tracheophyta</taxon>
        <taxon>Spermatophyta</taxon>
        <taxon>Magnoliopsida</taxon>
        <taxon>eudicotyledons</taxon>
        <taxon>Gunneridae</taxon>
        <taxon>Pentapetalae</taxon>
        <taxon>rosids</taxon>
        <taxon>malvids</taxon>
        <taxon>Brassicales</taxon>
        <taxon>Brassicaceae</taxon>
        <taxon>Camelineae</taxon>
        <taxon>Arabidopsis</taxon>
    </lineage>
</organism>
<accession>Q9S7T1</accession>
<accession>Q0WSA6</accession>
<reference key="1">
    <citation type="journal article" date="2000" name="Nature">
        <title>Sequence and analysis of chromosome 1 of the plant Arabidopsis thaliana.</title>
        <authorList>
            <person name="Theologis A."/>
            <person name="Ecker J.R."/>
            <person name="Palm C.J."/>
            <person name="Federspiel N.A."/>
            <person name="Kaul S."/>
            <person name="White O."/>
            <person name="Alonso J."/>
            <person name="Altafi H."/>
            <person name="Araujo R."/>
            <person name="Bowman C.L."/>
            <person name="Brooks S.Y."/>
            <person name="Buehler E."/>
            <person name="Chan A."/>
            <person name="Chao Q."/>
            <person name="Chen H."/>
            <person name="Cheuk R.F."/>
            <person name="Chin C.W."/>
            <person name="Chung M.K."/>
            <person name="Conn L."/>
            <person name="Conway A.B."/>
            <person name="Conway A.R."/>
            <person name="Creasy T.H."/>
            <person name="Dewar K."/>
            <person name="Dunn P."/>
            <person name="Etgu P."/>
            <person name="Feldblyum T.V."/>
            <person name="Feng J.-D."/>
            <person name="Fong B."/>
            <person name="Fujii C.Y."/>
            <person name="Gill J.E."/>
            <person name="Goldsmith A.D."/>
            <person name="Haas B."/>
            <person name="Hansen N.F."/>
            <person name="Hughes B."/>
            <person name="Huizar L."/>
            <person name="Hunter J.L."/>
            <person name="Jenkins J."/>
            <person name="Johnson-Hopson C."/>
            <person name="Khan S."/>
            <person name="Khaykin E."/>
            <person name="Kim C.J."/>
            <person name="Koo H.L."/>
            <person name="Kremenetskaia I."/>
            <person name="Kurtz D.B."/>
            <person name="Kwan A."/>
            <person name="Lam B."/>
            <person name="Langin-Hooper S."/>
            <person name="Lee A."/>
            <person name="Lee J.M."/>
            <person name="Lenz C.A."/>
            <person name="Li J.H."/>
            <person name="Li Y.-P."/>
            <person name="Lin X."/>
            <person name="Liu S.X."/>
            <person name="Liu Z.A."/>
            <person name="Luros J.S."/>
            <person name="Maiti R."/>
            <person name="Marziali A."/>
            <person name="Militscher J."/>
            <person name="Miranda M."/>
            <person name="Nguyen M."/>
            <person name="Nierman W.C."/>
            <person name="Osborne B.I."/>
            <person name="Pai G."/>
            <person name="Peterson J."/>
            <person name="Pham P.K."/>
            <person name="Rizzo M."/>
            <person name="Rooney T."/>
            <person name="Rowley D."/>
            <person name="Sakano H."/>
            <person name="Salzberg S.L."/>
            <person name="Schwartz J.R."/>
            <person name="Shinn P."/>
            <person name="Southwick A.M."/>
            <person name="Sun H."/>
            <person name="Tallon L.J."/>
            <person name="Tambunga G."/>
            <person name="Toriumi M.J."/>
            <person name="Town C.D."/>
            <person name="Utterback T."/>
            <person name="Van Aken S."/>
            <person name="Vaysberg M."/>
            <person name="Vysotskaia V.S."/>
            <person name="Walker M."/>
            <person name="Wu D."/>
            <person name="Yu G."/>
            <person name="Fraser C.M."/>
            <person name="Venter J.C."/>
            <person name="Davis R.W."/>
        </authorList>
    </citation>
    <scope>NUCLEOTIDE SEQUENCE [LARGE SCALE GENOMIC DNA]</scope>
    <source>
        <strain>cv. Columbia</strain>
    </source>
</reference>
<reference key="2">
    <citation type="journal article" date="2017" name="Plant J.">
        <title>Araport11: a complete reannotation of the Arabidopsis thaliana reference genome.</title>
        <authorList>
            <person name="Cheng C.Y."/>
            <person name="Krishnakumar V."/>
            <person name="Chan A.P."/>
            <person name="Thibaud-Nissen F."/>
            <person name="Schobel S."/>
            <person name="Town C.D."/>
        </authorList>
    </citation>
    <scope>GENOME REANNOTATION</scope>
    <source>
        <strain>cv. Columbia</strain>
    </source>
</reference>
<reference key="3">
    <citation type="submission" date="2004-12" db="EMBL/GenBank/DDBJ databases">
        <title>Arabidopsis ORF clones.</title>
        <authorList>
            <person name="Cheuk R.F."/>
            <person name="Chen H."/>
            <person name="Kim C.J."/>
            <person name="Shinn P."/>
            <person name="Ecker J.R."/>
        </authorList>
    </citation>
    <scope>NUCLEOTIDE SEQUENCE [LARGE SCALE MRNA]</scope>
    <source>
        <strain>cv. Columbia</strain>
    </source>
</reference>
<reference key="4">
    <citation type="submission" date="2006-07" db="EMBL/GenBank/DDBJ databases">
        <title>Large-scale analysis of RIKEN Arabidopsis full-length (RAFL) cDNAs.</title>
        <authorList>
            <person name="Totoki Y."/>
            <person name="Seki M."/>
            <person name="Ishida J."/>
            <person name="Nakajima M."/>
            <person name="Enju A."/>
            <person name="Kamiya A."/>
            <person name="Narusaka M."/>
            <person name="Shin-i T."/>
            <person name="Nakagawa M."/>
            <person name="Sakamoto N."/>
            <person name="Oishi K."/>
            <person name="Kohara Y."/>
            <person name="Kobayashi M."/>
            <person name="Toyoda A."/>
            <person name="Sakaki Y."/>
            <person name="Sakurai T."/>
            <person name="Iida K."/>
            <person name="Akiyama K."/>
            <person name="Satou M."/>
            <person name="Toyoda T."/>
            <person name="Konagaya A."/>
            <person name="Carninci P."/>
            <person name="Kawai J."/>
            <person name="Hayashizaki Y."/>
            <person name="Shinozaki K."/>
        </authorList>
    </citation>
    <scope>NUCLEOTIDE SEQUENCE [LARGE SCALE MRNA]</scope>
    <source>
        <strain>cv. Columbia</strain>
    </source>
</reference>
<reference key="5">
    <citation type="journal article" date="2002" name="Nucleic Acids Res.">
        <title>Analysis of histone acetyltransferase and histone deacetylase families of Arabidopsis thaliana suggests functional diversification of chromatin modification among multicellular eukaryotes.</title>
        <authorList>
            <person name="Pandey R."/>
            <person name="Mueller A."/>
            <person name="Napoli C.A."/>
            <person name="Selinger D.A."/>
            <person name="Pikaard C.S."/>
            <person name="Richards E.J."/>
            <person name="Bender J."/>
            <person name="Mount D.W."/>
            <person name="Jorgensen R.A."/>
        </authorList>
    </citation>
    <scope>GENE FAMILY</scope>
    <scope>NOMENCLATURE</scope>
</reference>
<reference key="6">
    <citation type="journal article" date="2008" name="J. Biol. Chem.">
        <title>The PHD domain of plant PIAS proteins mediates sumoylation of bromodomain GTE proteins.</title>
        <authorList>
            <person name="Garcia-Dominguez M."/>
            <person name="March-Diaz R."/>
            <person name="Reyes J.C."/>
        </authorList>
    </citation>
    <scope>FUNCTION</scope>
    <scope>INTERACTION WITH SIZ1</scope>
    <scope>SUMOYLATION</scope>
    <scope>ACETYLATED HISTONE H3-BINDING</scope>
</reference>
<comment type="function">
    <text evidence="5">Probable transcription factor that binds to acetylated histone H3.</text>
</comment>
<comment type="subunit">
    <text evidence="5">Interacts with SIZ1 (via PHD domain).</text>
</comment>
<comment type="subcellular location">
    <subcellularLocation>
        <location evidence="6">Plastid</location>
        <location evidence="6">Chloroplast</location>
    </subcellularLocation>
</comment>
<comment type="domain">
    <text>The NET domain could serve as an interface to localize different proteins or complexes to chromatin.</text>
</comment>
<comment type="PTM">
    <text evidence="5">Sumoylated by SIZ1. Sumoylation reduces capacity to bind to acetylated histone H3.</text>
</comment>